<reference key="1">
    <citation type="journal article" date="2005" name="Nature">
        <title>The genome of the social amoeba Dictyostelium discoideum.</title>
        <authorList>
            <person name="Eichinger L."/>
            <person name="Pachebat J.A."/>
            <person name="Gloeckner G."/>
            <person name="Rajandream M.A."/>
            <person name="Sucgang R."/>
            <person name="Berriman M."/>
            <person name="Song J."/>
            <person name="Olsen R."/>
            <person name="Szafranski K."/>
            <person name="Xu Q."/>
            <person name="Tunggal B."/>
            <person name="Kummerfeld S."/>
            <person name="Madera M."/>
            <person name="Konfortov B.A."/>
            <person name="Rivero F."/>
            <person name="Bankier A.T."/>
            <person name="Lehmann R."/>
            <person name="Hamlin N."/>
            <person name="Davies R."/>
            <person name="Gaudet P."/>
            <person name="Fey P."/>
            <person name="Pilcher K."/>
            <person name="Chen G."/>
            <person name="Saunders D."/>
            <person name="Sodergren E.J."/>
            <person name="Davis P."/>
            <person name="Kerhornou A."/>
            <person name="Nie X."/>
            <person name="Hall N."/>
            <person name="Anjard C."/>
            <person name="Hemphill L."/>
            <person name="Bason N."/>
            <person name="Farbrother P."/>
            <person name="Desany B."/>
            <person name="Just E."/>
            <person name="Morio T."/>
            <person name="Rost R."/>
            <person name="Churcher C.M."/>
            <person name="Cooper J."/>
            <person name="Haydock S."/>
            <person name="van Driessche N."/>
            <person name="Cronin A."/>
            <person name="Goodhead I."/>
            <person name="Muzny D.M."/>
            <person name="Mourier T."/>
            <person name="Pain A."/>
            <person name="Lu M."/>
            <person name="Harper D."/>
            <person name="Lindsay R."/>
            <person name="Hauser H."/>
            <person name="James K.D."/>
            <person name="Quiles M."/>
            <person name="Madan Babu M."/>
            <person name="Saito T."/>
            <person name="Buchrieser C."/>
            <person name="Wardroper A."/>
            <person name="Felder M."/>
            <person name="Thangavelu M."/>
            <person name="Johnson D."/>
            <person name="Knights A."/>
            <person name="Loulseged H."/>
            <person name="Mungall K.L."/>
            <person name="Oliver K."/>
            <person name="Price C."/>
            <person name="Quail M.A."/>
            <person name="Urushihara H."/>
            <person name="Hernandez J."/>
            <person name="Rabbinowitsch E."/>
            <person name="Steffen D."/>
            <person name="Sanders M."/>
            <person name="Ma J."/>
            <person name="Kohara Y."/>
            <person name="Sharp S."/>
            <person name="Simmonds M.N."/>
            <person name="Spiegler S."/>
            <person name="Tivey A."/>
            <person name="Sugano S."/>
            <person name="White B."/>
            <person name="Walker D."/>
            <person name="Woodward J.R."/>
            <person name="Winckler T."/>
            <person name="Tanaka Y."/>
            <person name="Shaulsky G."/>
            <person name="Schleicher M."/>
            <person name="Weinstock G.M."/>
            <person name="Rosenthal A."/>
            <person name="Cox E.C."/>
            <person name="Chisholm R.L."/>
            <person name="Gibbs R.A."/>
            <person name="Loomis W.F."/>
            <person name="Platzer M."/>
            <person name="Kay R.R."/>
            <person name="Williams J.G."/>
            <person name="Dear P.H."/>
            <person name="Noegel A.A."/>
            <person name="Barrell B.G."/>
            <person name="Kuspa A."/>
        </authorList>
    </citation>
    <scope>NUCLEOTIDE SEQUENCE [LARGE SCALE GENOMIC DNA]</scope>
    <source>
        <strain>AX4</strain>
    </source>
</reference>
<evidence type="ECO:0000256" key="1">
    <source>
        <dbReference type="SAM" id="MobiDB-lite"/>
    </source>
</evidence>
<evidence type="ECO:0000305" key="2"/>
<feature type="chain" id="PRO_0000328054" description="WD repeat-containing protein 53 homolog">
    <location>
        <begin position="1"/>
        <end position="368"/>
    </location>
</feature>
<feature type="repeat" description="WD 1">
    <location>
        <begin position="27"/>
        <end position="66"/>
    </location>
</feature>
<feature type="repeat" description="WD 2">
    <location>
        <begin position="71"/>
        <end position="108"/>
    </location>
</feature>
<feature type="repeat" description="WD 3">
    <location>
        <begin position="116"/>
        <end position="155"/>
    </location>
</feature>
<feature type="repeat" description="WD 4">
    <location>
        <begin position="159"/>
        <end position="199"/>
    </location>
</feature>
<feature type="repeat" description="WD 5">
    <location>
        <begin position="228"/>
        <end position="267"/>
    </location>
</feature>
<feature type="repeat" description="WD 6">
    <location>
        <begin position="271"/>
        <end position="315"/>
    </location>
</feature>
<feature type="region of interest" description="Disordered" evidence="1">
    <location>
        <begin position="207"/>
        <end position="231"/>
    </location>
</feature>
<accession>Q54BI5</accession>
<keyword id="KW-1185">Reference proteome</keyword>
<keyword id="KW-0677">Repeat</keyword>
<keyword id="KW-0853">WD repeat</keyword>
<sequence length="368" mass="41988">MTSVDINNNNNNNNNSNSNIIETKLIGHKDTVLCISSHNKKEIIASGSDDCTVRIWDLNTNKSIQSIVEGFQGNPVNNVCFDQDFTLYCSYDNIIVSFDLRQPNVILKEFNTQYKFNTEEINQLSFDSKYQYLAACDDSGQTKIIDVTKNKLVESLNKKHTNIATGCVFRPNSKNELITSSMDFSIIHWDFLKAKVLHRDTFKEGSLPQNISKSQQQQQETTEPNRMLNPPFVTSVDCSNNSKYVAISMGDGTIVINEISSFKQYLKINSIHKSSIQQVHYPKYLENNYQRLISFGNYDKKIVIWDVSEDMNTKVSSSLLSNDEKNNERIKTWLEHSEKINCLTTSNLKNNAIFVADLSNDLKLLSIQ</sequence>
<name>WDR53_DICDI</name>
<organism>
    <name type="scientific">Dictyostelium discoideum</name>
    <name type="common">Social amoeba</name>
    <dbReference type="NCBI Taxonomy" id="44689"/>
    <lineage>
        <taxon>Eukaryota</taxon>
        <taxon>Amoebozoa</taxon>
        <taxon>Evosea</taxon>
        <taxon>Eumycetozoa</taxon>
        <taxon>Dictyostelia</taxon>
        <taxon>Dictyosteliales</taxon>
        <taxon>Dictyosteliaceae</taxon>
        <taxon>Dictyostelium</taxon>
    </lineage>
</organism>
<gene>
    <name type="primary">wdr53</name>
    <name type="ORF">DDB_G0293608</name>
</gene>
<dbReference type="EMBL" id="AAFI02000218">
    <property type="protein sequence ID" value="EAL60616.1"/>
    <property type="molecule type" value="Genomic_DNA"/>
</dbReference>
<dbReference type="RefSeq" id="XP_629044.1">
    <property type="nucleotide sequence ID" value="XM_629042.1"/>
</dbReference>
<dbReference type="SMR" id="Q54BI5"/>
<dbReference type="FunCoup" id="Q54BI5">
    <property type="interactions" value="86"/>
</dbReference>
<dbReference type="STRING" id="44689.Q54BI5"/>
<dbReference type="PaxDb" id="44689-DDB0266374"/>
<dbReference type="EnsemblProtists" id="EAL60616">
    <property type="protein sequence ID" value="EAL60616"/>
    <property type="gene ID" value="DDB_G0293608"/>
</dbReference>
<dbReference type="GeneID" id="8629330"/>
<dbReference type="KEGG" id="ddi:DDB_G0293608"/>
<dbReference type="dictyBase" id="DDB_G0293608">
    <property type="gene designation" value="wdr53"/>
</dbReference>
<dbReference type="VEuPathDB" id="AmoebaDB:DDB_G0293608"/>
<dbReference type="eggNOG" id="ENOG502QQ86">
    <property type="taxonomic scope" value="Eukaryota"/>
</dbReference>
<dbReference type="HOGENOM" id="CLU_057939_1_0_1"/>
<dbReference type="InParanoid" id="Q54BI5"/>
<dbReference type="OMA" id="GDLMVWG"/>
<dbReference type="PhylomeDB" id="Q54BI5"/>
<dbReference type="PRO" id="PR:Q54BI5"/>
<dbReference type="Proteomes" id="UP000002195">
    <property type="component" value="Chromosome 6"/>
</dbReference>
<dbReference type="Gene3D" id="2.130.10.10">
    <property type="entry name" value="YVTN repeat-like/Quinoprotein amine dehydrogenase"/>
    <property type="match status" value="2"/>
</dbReference>
<dbReference type="InterPro" id="IPR015943">
    <property type="entry name" value="WD40/YVTN_repeat-like_dom_sf"/>
</dbReference>
<dbReference type="InterPro" id="IPR019775">
    <property type="entry name" value="WD40_repeat_CS"/>
</dbReference>
<dbReference type="InterPro" id="IPR036322">
    <property type="entry name" value="WD40_repeat_dom_sf"/>
</dbReference>
<dbReference type="InterPro" id="IPR001680">
    <property type="entry name" value="WD40_rpt"/>
</dbReference>
<dbReference type="InterPro" id="IPR042453">
    <property type="entry name" value="WDR53"/>
</dbReference>
<dbReference type="PANTHER" id="PTHR44666">
    <property type="entry name" value="WD REPEAT-CONTAINING PROTEIN 53"/>
    <property type="match status" value="1"/>
</dbReference>
<dbReference type="PANTHER" id="PTHR44666:SF1">
    <property type="entry name" value="WD REPEAT-CONTAINING PROTEIN 53"/>
    <property type="match status" value="1"/>
</dbReference>
<dbReference type="Pfam" id="PF00400">
    <property type="entry name" value="WD40"/>
    <property type="match status" value="2"/>
</dbReference>
<dbReference type="SMART" id="SM00320">
    <property type="entry name" value="WD40"/>
    <property type="match status" value="6"/>
</dbReference>
<dbReference type="SUPFAM" id="SSF50978">
    <property type="entry name" value="WD40 repeat-like"/>
    <property type="match status" value="1"/>
</dbReference>
<dbReference type="PROSITE" id="PS00678">
    <property type="entry name" value="WD_REPEATS_1"/>
    <property type="match status" value="1"/>
</dbReference>
<dbReference type="PROSITE" id="PS50082">
    <property type="entry name" value="WD_REPEATS_2"/>
    <property type="match status" value="1"/>
</dbReference>
<dbReference type="PROSITE" id="PS50294">
    <property type="entry name" value="WD_REPEATS_REGION"/>
    <property type="match status" value="1"/>
</dbReference>
<protein>
    <recommendedName>
        <fullName>WD repeat-containing protein 53 homolog</fullName>
    </recommendedName>
</protein>
<comment type="similarity">
    <text evidence="2">Belongs to the WD repeat WDR53 family.</text>
</comment>
<proteinExistence type="inferred from homology"/>